<sequence>MASSRVVLILSISMVLLSSVAIATDHIVGDDKGWTVDFDYTQWAQDKVFRVGDNLVFNYDPARHNVFKVNGTLFQSCTFPPKNEALSTGKDIIQLKTEGRKWYVCGVADHCSARQMKLVITVLAEGAPAPSPPPSSDAHSVVSSLFGVVMAIMVAIAVIFA</sequence>
<keyword id="KW-0186">Copper</keyword>
<keyword id="KW-1015">Disulfide bond</keyword>
<keyword id="KW-0249">Electron transport</keyword>
<keyword id="KW-0325">Glycoprotein</keyword>
<keyword id="KW-0472">Membrane</keyword>
<keyword id="KW-0479">Metal-binding</keyword>
<keyword id="KW-1185">Reference proteome</keyword>
<keyword id="KW-0732">Signal</keyword>
<keyword id="KW-0812">Transmembrane</keyword>
<keyword id="KW-1133">Transmembrane helix</keyword>
<keyword id="KW-0813">Transport</keyword>
<proteinExistence type="evidence at transcript level"/>
<reference key="1">
    <citation type="journal article" date="2011" name="Nature">
        <title>The Medicago genome provides insight into the evolution of rhizobial symbioses.</title>
        <authorList>
            <person name="Young N.D."/>
            <person name="Debelle F."/>
            <person name="Oldroyd G.E.D."/>
            <person name="Geurts R."/>
            <person name="Cannon S.B."/>
            <person name="Udvardi M.K."/>
            <person name="Benedito V.A."/>
            <person name="Mayer K.F.X."/>
            <person name="Gouzy J."/>
            <person name="Schoof H."/>
            <person name="Van de Peer Y."/>
            <person name="Proost S."/>
            <person name="Cook D.R."/>
            <person name="Meyers B.C."/>
            <person name="Spannagl M."/>
            <person name="Cheung F."/>
            <person name="De Mita S."/>
            <person name="Krishnakumar V."/>
            <person name="Gundlach H."/>
            <person name="Zhou S."/>
            <person name="Mudge J."/>
            <person name="Bharti A.K."/>
            <person name="Murray J.D."/>
            <person name="Naoumkina M.A."/>
            <person name="Rosen B."/>
            <person name="Silverstein K.A.T."/>
            <person name="Tang H."/>
            <person name="Rombauts S."/>
            <person name="Zhao P.X."/>
            <person name="Zhou P."/>
            <person name="Barbe V."/>
            <person name="Bardou P."/>
            <person name="Bechner M."/>
            <person name="Bellec A."/>
            <person name="Berger A."/>
            <person name="Berges H."/>
            <person name="Bidwell S."/>
            <person name="Bisseling T."/>
            <person name="Choisne N."/>
            <person name="Couloux A."/>
            <person name="Denny R."/>
            <person name="Deshpande S."/>
            <person name="Dai X."/>
            <person name="Doyle J.J."/>
            <person name="Dudez A.-M."/>
            <person name="Farmer A.D."/>
            <person name="Fouteau S."/>
            <person name="Franken C."/>
            <person name="Gibelin C."/>
            <person name="Gish J."/>
            <person name="Goldstein S."/>
            <person name="Gonzalez A.J."/>
            <person name="Green P.J."/>
            <person name="Hallab A."/>
            <person name="Hartog M."/>
            <person name="Hua A."/>
            <person name="Humphray S.J."/>
            <person name="Jeong D.-H."/>
            <person name="Jing Y."/>
            <person name="Jocker A."/>
            <person name="Kenton S.M."/>
            <person name="Kim D.-J."/>
            <person name="Klee K."/>
            <person name="Lai H."/>
            <person name="Lang C."/>
            <person name="Lin S."/>
            <person name="Macmil S.L."/>
            <person name="Magdelenat G."/>
            <person name="Matthews L."/>
            <person name="McCorrison J."/>
            <person name="Monaghan E.L."/>
            <person name="Mun J.-H."/>
            <person name="Najar F.Z."/>
            <person name="Nicholson C."/>
            <person name="Noirot C."/>
            <person name="O'Bleness M."/>
            <person name="Paule C.R."/>
            <person name="Poulain J."/>
            <person name="Prion F."/>
            <person name="Qin B."/>
            <person name="Qu C."/>
            <person name="Retzel E.F."/>
            <person name="Riddle C."/>
            <person name="Sallet E."/>
            <person name="Samain S."/>
            <person name="Samson N."/>
            <person name="Sanders I."/>
            <person name="Saurat O."/>
            <person name="Scarpelli C."/>
            <person name="Schiex T."/>
            <person name="Segurens B."/>
            <person name="Severin A.J."/>
            <person name="Sherrier D.J."/>
            <person name="Shi R."/>
            <person name="Sims S."/>
            <person name="Singer S.R."/>
            <person name="Sinharoy S."/>
            <person name="Sterck L."/>
            <person name="Viollet A."/>
            <person name="Wang B.-B."/>
            <person name="Wang K."/>
            <person name="Wang M."/>
            <person name="Wang X."/>
            <person name="Warfsmann J."/>
            <person name="Weissenbach J."/>
            <person name="White D.D."/>
            <person name="White J.D."/>
            <person name="Wiley G.B."/>
            <person name="Wincker P."/>
            <person name="Xing Y."/>
            <person name="Yang L."/>
            <person name="Yao Z."/>
            <person name="Ying F."/>
            <person name="Zhai J."/>
            <person name="Zhou L."/>
            <person name="Zuber A."/>
            <person name="Denarie J."/>
            <person name="Dixon R.A."/>
            <person name="May G.D."/>
            <person name="Schwartz D.C."/>
            <person name="Rogers J."/>
            <person name="Quetier F."/>
            <person name="Town C.D."/>
            <person name="Roe B.A."/>
        </authorList>
    </citation>
    <scope>NUCLEOTIDE SEQUENCE [LARGE SCALE GENOMIC DNA]</scope>
    <source>
        <strain>cv. Jemalong A17</strain>
    </source>
</reference>
<reference key="2">
    <citation type="journal article" date="2014" name="BMC Genomics">
        <title>An improved genome release (version Mt4.0) for the model legume Medicago truncatula.</title>
        <authorList>
            <person name="Tang H."/>
            <person name="Krishnakumar V."/>
            <person name="Bidwell S."/>
            <person name="Rosen B."/>
            <person name="Chan A."/>
            <person name="Zhou S."/>
            <person name="Gentzbittel L."/>
            <person name="Childs K.L."/>
            <person name="Yandell M."/>
            <person name="Gundlach H."/>
            <person name="Mayer K.F."/>
            <person name="Schwartz D.C."/>
            <person name="Town C.D."/>
        </authorList>
    </citation>
    <scope>GENOME REANNOTATION</scope>
    <source>
        <strain>cv. Jemalong A17</strain>
    </source>
</reference>
<reference key="3">
    <citation type="journal article" date="2018" name="Nat. Plants">
        <title>Whole-genome landscape of Medicago truncatula symbiotic genes.</title>
        <authorList>
            <person name="Pecrix Y."/>
            <person name="Staton S.E."/>
            <person name="Sallet E."/>
            <person name="Lelandais-Briere C."/>
            <person name="Moreau S."/>
            <person name="Carrere S."/>
            <person name="Blein T."/>
            <person name="Jardinaud M.F."/>
            <person name="Latrasse D."/>
            <person name="Zouine M."/>
            <person name="Zahm M."/>
            <person name="Kreplak J."/>
            <person name="Mayjonade B."/>
            <person name="Satge C."/>
            <person name="Perez M."/>
            <person name="Cauet S."/>
            <person name="Marande W."/>
            <person name="Chantry-Darmon C."/>
            <person name="Lopez-Roques C."/>
            <person name="Bouchez O."/>
            <person name="Berard A."/>
            <person name="Debelle F."/>
            <person name="Munos S."/>
            <person name="Bendahmane A."/>
            <person name="Berges H."/>
            <person name="Niebel A."/>
            <person name="Buitink J."/>
            <person name="Frugier F."/>
            <person name="Benhamed M."/>
            <person name="Crespi M."/>
            <person name="Gouzy J."/>
            <person name="Gamas P."/>
        </authorList>
    </citation>
    <scope>NUCLEOTIDE SEQUENCE [LARGE SCALE GENOMIC DNA]</scope>
    <source>
        <strain>cv. Jemalong A17</strain>
    </source>
</reference>
<reference key="4">
    <citation type="journal article" date="2010" name="Mol. Plant Microbe Interact.">
        <title>Transcription of two blue copper-binding protein isogenes is highly correlated with arbuscular mycorrhizal development in Medicago truncatula.</title>
        <authorList>
            <person name="Paradi I."/>
            <person name="van Tuinen D."/>
            <person name="Morandi D."/>
            <person name="Ochatt S."/>
            <person name="Robert F."/>
            <person name="Jacas L."/>
            <person name="Dumas-Gaudot E."/>
        </authorList>
    </citation>
    <scope>INDUCTION BY GLOMUS INTRARADICES</scope>
    <source>
        <strain>cv. Jemalong J5</strain>
    </source>
</reference>
<reference key="5">
    <citation type="journal article" date="2015" name="Plant Physiol.">
        <title>Hyphal branching during arbuscule development requires reduced arbuscular mycorrhiza1.</title>
        <authorList>
            <person name="Park H.-J."/>
            <person name="Floss D.S."/>
            <person name="Levesque-Tremblay V."/>
            <person name="Bravo A."/>
            <person name="Harrison M.J."/>
        </authorList>
    </citation>
    <scope>INDUCTION BY RAM1 AND GLOMUS VERSIFORME</scope>
</reference>
<feature type="signal peptide" evidence="1">
    <location>
        <begin position="1"/>
        <end position="23"/>
    </location>
</feature>
<feature type="chain" id="PRO_5014573954" description="Blue copper protein 1a">
    <location>
        <begin position="24"/>
        <end position="161"/>
    </location>
</feature>
<feature type="transmembrane region" description="Helical" evidence="1">
    <location>
        <begin position="141"/>
        <end position="161"/>
    </location>
</feature>
<feature type="domain" description="Phytocyanin" evidence="3">
    <location>
        <begin position="24"/>
        <end position="124"/>
    </location>
</feature>
<feature type="binding site" evidence="3">
    <location>
        <position position="64"/>
    </location>
    <ligand>
        <name>Cu cation</name>
        <dbReference type="ChEBI" id="CHEBI:23378"/>
    </ligand>
</feature>
<feature type="binding site" evidence="3">
    <location>
        <position position="105"/>
    </location>
    <ligand>
        <name>Cu cation</name>
        <dbReference type="ChEBI" id="CHEBI:23378"/>
    </ligand>
</feature>
<feature type="binding site" evidence="3">
    <location>
        <position position="110"/>
    </location>
    <ligand>
        <name>Cu cation</name>
        <dbReference type="ChEBI" id="CHEBI:23378"/>
    </ligand>
</feature>
<feature type="binding site" evidence="3">
    <location>
        <position position="116"/>
    </location>
    <ligand>
        <name>Cu cation</name>
        <dbReference type="ChEBI" id="CHEBI:23378"/>
    </ligand>
</feature>
<feature type="glycosylation site" description="N-linked (GlcNAc...) asparagine" evidence="2">
    <location>
        <position position="70"/>
    </location>
</feature>
<feature type="disulfide bond" evidence="3">
    <location>
        <begin position="77"/>
        <end position="111"/>
    </location>
</feature>
<comment type="subcellular location">
    <subcellularLocation>
        <location evidence="1">Membrane</location>
        <topology evidence="1">Single-pass type I membrane protein</topology>
    </subcellularLocation>
</comment>
<comment type="induction">
    <text evidence="4 5">Accumulates in roots, in a RAM1-dependent manner, during colonization by arbuscular mycorrhizal (AM) fungi (e.g. Glomus versiforme and G.intraradices); the expression level correlates tightly with AM development.</text>
</comment>
<evidence type="ECO:0000255" key="1"/>
<evidence type="ECO:0000255" key="2">
    <source>
        <dbReference type="PROSITE-ProRule" id="PRU00498"/>
    </source>
</evidence>
<evidence type="ECO:0000255" key="3">
    <source>
        <dbReference type="PROSITE-ProRule" id="PRU00818"/>
    </source>
</evidence>
<evidence type="ECO:0000269" key="4">
    <source>
    </source>
</evidence>
<evidence type="ECO:0000269" key="5">
    <source>
    </source>
</evidence>
<evidence type="ECO:0000303" key="6">
    <source>
    </source>
</evidence>
<evidence type="ECO:0000312" key="7">
    <source>
        <dbReference type="EMBL" id="AES80881.1"/>
    </source>
</evidence>
<evidence type="ECO:0000312" key="8">
    <source>
        <dbReference type="EMBL" id="AES80885.1"/>
    </source>
</evidence>
<evidence type="ECO:0000312" key="9">
    <source>
        <dbReference type="EMBL" id="RHN47499.1"/>
    </source>
</evidence>
<evidence type="ECO:0000312" key="10">
    <source>
        <dbReference type="EMBL" id="RHN47502.1"/>
    </source>
</evidence>
<gene>
    <name evidence="7" type="ordered locus">MTR_7g086140</name>
    <name evidence="9" type="ORF">MtrunA17_Chr7g0253671</name>
</gene>
<gene>
    <name evidence="6" type="primary">BCP1A</name>
    <name evidence="6" type="synonym">MtC30378</name>
    <name evidence="8" type="ordered locus">MTR_7g086190</name>
    <name evidence="10" type="ORF">MtrunA17_Chr7g0253701</name>
</gene>
<name>BCP1A_MEDTR</name>
<accession>G7L0H3</accession>
<dbReference type="EMBL" id="CM001223">
    <property type="protein sequence ID" value="AES80881.1"/>
    <property type="molecule type" value="Genomic_DNA"/>
</dbReference>
<dbReference type="EMBL" id="CM001223">
    <property type="protein sequence ID" value="AES80885.1"/>
    <property type="molecule type" value="Genomic_DNA"/>
</dbReference>
<dbReference type="EMBL" id="PSQE01000007">
    <property type="protein sequence ID" value="RHN47499.1"/>
    <property type="molecule type" value="Genomic_DNA"/>
</dbReference>
<dbReference type="EMBL" id="PSQE01000007">
    <property type="protein sequence ID" value="RHN47502.1"/>
    <property type="molecule type" value="Genomic_DNA"/>
</dbReference>
<dbReference type="SMR" id="G7L0H3"/>
<dbReference type="STRING" id="3880.G7L0H3"/>
<dbReference type="GlyCosmos" id="G7L0H3">
    <property type="glycosylation" value="1 site, No reported glycans"/>
</dbReference>
<dbReference type="PaxDb" id="3880-AES80881"/>
<dbReference type="EnsemblPlants" id="rna42110">
    <property type="protein sequence ID" value="RHN47499.1"/>
    <property type="gene ID" value="gene42110"/>
</dbReference>
<dbReference type="EnsemblPlants" id="rna42113">
    <property type="protein sequence ID" value="RHN47502.1"/>
    <property type="gene ID" value="gene42113"/>
</dbReference>
<dbReference type="GeneID" id="11427104"/>
<dbReference type="Gramene" id="rna42110">
    <property type="protein sequence ID" value="RHN47499.1"/>
    <property type="gene ID" value="gene42110"/>
</dbReference>
<dbReference type="Gramene" id="rna42113">
    <property type="protein sequence ID" value="RHN47502.1"/>
    <property type="gene ID" value="gene42113"/>
</dbReference>
<dbReference type="KEGG" id="mtr:11427104"/>
<dbReference type="KEGG" id="mtr:11437278"/>
<dbReference type="eggNOG" id="ENOG502S3NY">
    <property type="taxonomic scope" value="Eukaryota"/>
</dbReference>
<dbReference type="HOGENOM" id="CLU_058719_4_0_1"/>
<dbReference type="OMA" id="AVGSHCV"/>
<dbReference type="OrthoDB" id="687943at2759"/>
<dbReference type="Proteomes" id="UP000002051">
    <property type="component" value="Chomosome 7"/>
</dbReference>
<dbReference type="Proteomes" id="UP000265566">
    <property type="component" value="Chromosome 7"/>
</dbReference>
<dbReference type="GO" id="GO:0005886">
    <property type="term" value="C:plasma membrane"/>
    <property type="evidence" value="ECO:0000318"/>
    <property type="project" value="GO_Central"/>
</dbReference>
<dbReference type="GO" id="GO:0009055">
    <property type="term" value="F:electron transfer activity"/>
    <property type="evidence" value="ECO:0007669"/>
    <property type="project" value="InterPro"/>
</dbReference>
<dbReference type="GO" id="GO:0046872">
    <property type="term" value="F:metal ion binding"/>
    <property type="evidence" value="ECO:0007669"/>
    <property type="project" value="UniProtKB-KW"/>
</dbReference>
<dbReference type="GO" id="GO:0009610">
    <property type="term" value="P:response to symbiotic fungus"/>
    <property type="evidence" value="ECO:0000270"/>
    <property type="project" value="UniProtKB"/>
</dbReference>
<dbReference type="CDD" id="cd04216">
    <property type="entry name" value="Phytocyanin"/>
    <property type="match status" value="1"/>
</dbReference>
<dbReference type="FunFam" id="2.60.40.420:FF:000067">
    <property type="entry name" value="Cupredoxin superfamily protein"/>
    <property type="match status" value="1"/>
</dbReference>
<dbReference type="Gene3D" id="2.60.40.420">
    <property type="entry name" value="Cupredoxins - blue copper proteins"/>
    <property type="match status" value="1"/>
</dbReference>
<dbReference type="InterPro" id="IPR008972">
    <property type="entry name" value="Cupredoxin"/>
</dbReference>
<dbReference type="InterPro" id="IPR039391">
    <property type="entry name" value="Phytocyanin-like"/>
</dbReference>
<dbReference type="InterPro" id="IPR003245">
    <property type="entry name" value="Phytocyanin_dom"/>
</dbReference>
<dbReference type="PANTHER" id="PTHR33021">
    <property type="entry name" value="BLUE COPPER PROTEIN"/>
    <property type="match status" value="1"/>
</dbReference>
<dbReference type="PANTHER" id="PTHR33021:SF549">
    <property type="entry name" value="BLUE COPPER PROTEIN 1B"/>
    <property type="match status" value="1"/>
</dbReference>
<dbReference type="Pfam" id="PF02298">
    <property type="entry name" value="Cu_bind_like"/>
    <property type="match status" value="1"/>
</dbReference>
<dbReference type="SUPFAM" id="SSF49503">
    <property type="entry name" value="Cupredoxins"/>
    <property type="match status" value="1"/>
</dbReference>
<dbReference type="PROSITE" id="PS51485">
    <property type="entry name" value="PHYTOCYANIN"/>
    <property type="match status" value="1"/>
</dbReference>
<protein>
    <recommendedName>
        <fullName evidence="6">Blue copper protein 1a</fullName>
        <shortName evidence="6">MtBcp1a</shortName>
    </recommendedName>
</protein>
<organism>
    <name type="scientific">Medicago truncatula</name>
    <name type="common">Barrel medic</name>
    <name type="synonym">Medicago tribuloides</name>
    <dbReference type="NCBI Taxonomy" id="3880"/>
    <lineage>
        <taxon>Eukaryota</taxon>
        <taxon>Viridiplantae</taxon>
        <taxon>Streptophyta</taxon>
        <taxon>Embryophyta</taxon>
        <taxon>Tracheophyta</taxon>
        <taxon>Spermatophyta</taxon>
        <taxon>Magnoliopsida</taxon>
        <taxon>eudicotyledons</taxon>
        <taxon>Gunneridae</taxon>
        <taxon>Pentapetalae</taxon>
        <taxon>rosids</taxon>
        <taxon>fabids</taxon>
        <taxon>Fabales</taxon>
        <taxon>Fabaceae</taxon>
        <taxon>Papilionoideae</taxon>
        <taxon>50 kb inversion clade</taxon>
        <taxon>NPAAA clade</taxon>
        <taxon>Hologalegina</taxon>
        <taxon>IRL clade</taxon>
        <taxon>Trifolieae</taxon>
        <taxon>Medicago</taxon>
    </lineage>
</organism>